<keyword id="KW-1003">Cell membrane</keyword>
<keyword id="KW-1015">Disulfide bond</keyword>
<keyword id="KW-0297">G-protein coupled receptor</keyword>
<keyword id="KW-0325">Glycoprotein</keyword>
<keyword id="KW-0472">Membrane</keyword>
<keyword id="KW-0675">Receptor</keyword>
<keyword id="KW-1185">Reference proteome</keyword>
<keyword id="KW-0807">Transducer</keyword>
<keyword id="KW-0812">Transmembrane</keyword>
<keyword id="KW-1133">Transmembrane helix</keyword>
<comment type="function">
    <text>Receptor for prolactin-releasing peptide (PrRP). Implicated in lactation, regulation of food intake and pain-signal processing.</text>
</comment>
<comment type="subunit">
    <text evidence="1">Interacts through its C-terminal region with the PDZ domain-containing proteins GRIP1, GRIP2 and PICK1. Interacts with PDZ domains 4 and 5 of GRIP1 and with the PDZ domain of PICK1 (By similarity).</text>
</comment>
<comment type="subcellular location">
    <subcellularLocation>
        <location>Cell membrane</location>
        <topology>Multi-pass membrane protein</topology>
    </subcellularLocation>
</comment>
<comment type="tissue specificity">
    <text evidence="5">Widely expressed, with highest levels in pituitary, cerebellum, and hypothalamus.</text>
</comment>
<comment type="similarity">
    <text evidence="3">Belongs to the G-protein coupled receptor 1 family.</text>
</comment>
<dbReference type="EMBL" id="S77867">
    <property type="protein sequence ID" value="AAB34129.1"/>
    <property type="molecule type" value="mRNA"/>
</dbReference>
<dbReference type="RefSeq" id="NP_631932.3">
    <property type="nucleotide sequence ID" value="NM_139193.3"/>
</dbReference>
<dbReference type="SMR" id="Q64121"/>
<dbReference type="FunCoup" id="Q64121">
    <property type="interactions" value="24"/>
</dbReference>
<dbReference type="STRING" id="10116.ENSRNOP00000013170"/>
<dbReference type="GlyCosmos" id="Q64121">
    <property type="glycosylation" value="2 sites, No reported glycans"/>
</dbReference>
<dbReference type="GlyGen" id="Q64121">
    <property type="glycosylation" value="3 sites"/>
</dbReference>
<dbReference type="PhosphoSitePlus" id="Q64121"/>
<dbReference type="PaxDb" id="10116-ENSRNOP00000013170"/>
<dbReference type="GeneID" id="246075"/>
<dbReference type="KEGG" id="rno:246075"/>
<dbReference type="AGR" id="RGD:71037"/>
<dbReference type="CTD" id="2834"/>
<dbReference type="RGD" id="71037">
    <property type="gene designation" value="Prlhr"/>
</dbReference>
<dbReference type="eggNOG" id="KOG3656">
    <property type="taxonomic scope" value="Eukaryota"/>
</dbReference>
<dbReference type="InParanoid" id="Q64121"/>
<dbReference type="OrthoDB" id="6506432at2759"/>
<dbReference type="PhylomeDB" id="Q64121"/>
<dbReference type="Reactome" id="R-RNO-375276">
    <property type="pathway name" value="Peptide ligand-binding receptors"/>
</dbReference>
<dbReference type="PRO" id="PR:Q64121"/>
<dbReference type="Proteomes" id="UP000002494">
    <property type="component" value="Unplaced"/>
</dbReference>
<dbReference type="GO" id="GO:0005929">
    <property type="term" value="C:cilium"/>
    <property type="evidence" value="ECO:0000266"/>
    <property type="project" value="RGD"/>
</dbReference>
<dbReference type="GO" id="GO:0043005">
    <property type="term" value="C:neuron projection"/>
    <property type="evidence" value="ECO:0000318"/>
    <property type="project" value="GO_Central"/>
</dbReference>
<dbReference type="GO" id="GO:0005886">
    <property type="term" value="C:plasma membrane"/>
    <property type="evidence" value="ECO:0000318"/>
    <property type="project" value="GO_Central"/>
</dbReference>
<dbReference type="GO" id="GO:0004930">
    <property type="term" value="F:G protein-coupled receptor activity"/>
    <property type="evidence" value="ECO:0000315"/>
    <property type="project" value="RGD"/>
</dbReference>
<dbReference type="GO" id="GO:0042923">
    <property type="term" value="F:neuropeptide binding"/>
    <property type="evidence" value="ECO:0000318"/>
    <property type="project" value="GO_Central"/>
</dbReference>
<dbReference type="GO" id="GO:0008188">
    <property type="term" value="F:neuropeptide receptor activity"/>
    <property type="evidence" value="ECO:0000318"/>
    <property type="project" value="GO_Central"/>
</dbReference>
<dbReference type="GO" id="GO:0004983">
    <property type="term" value="F:neuropeptide Y receptor activity"/>
    <property type="evidence" value="ECO:0007669"/>
    <property type="project" value="InterPro"/>
</dbReference>
<dbReference type="GO" id="GO:0017046">
    <property type="term" value="F:peptide hormone binding"/>
    <property type="evidence" value="ECO:0000315"/>
    <property type="project" value="RGD"/>
</dbReference>
<dbReference type="GO" id="GO:0007631">
    <property type="term" value="P:feeding behavior"/>
    <property type="evidence" value="ECO:0000315"/>
    <property type="project" value="RGD"/>
</dbReference>
<dbReference type="GO" id="GO:0007186">
    <property type="term" value="P:G protein-coupled receptor signaling pathway"/>
    <property type="evidence" value="ECO:0000315"/>
    <property type="project" value="RGD"/>
</dbReference>
<dbReference type="GO" id="GO:0042445">
    <property type="term" value="P:hormone metabolic process"/>
    <property type="evidence" value="ECO:0000266"/>
    <property type="project" value="RGD"/>
</dbReference>
<dbReference type="CDD" id="cd15394">
    <property type="entry name" value="7tmA_PrRP_R"/>
    <property type="match status" value="1"/>
</dbReference>
<dbReference type="FunFam" id="1.20.1070.10:FF:000119">
    <property type="entry name" value="Prolactin releasing hormone receptor"/>
    <property type="match status" value="1"/>
</dbReference>
<dbReference type="Gene3D" id="1.20.1070.10">
    <property type="entry name" value="Rhodopsin 7-helix transmembrane proteins"/>
    <property type="match status" value="1"/>
</dbReference>
<dbReference type="InterPro" id="IPR000276">
    <property type="entry name" value="GPCR_Rhodpsn"/>
</dbReference>
<dbReference type="InterPro" id="IPR017452">
    <property type="entry name" value="GPCR_Rhodpsn_7TM"/>
</dbReference>
<dbReference type="InterPro" id="IPR001402">
    <property type="entry name" value="Prolrel_pep_rcpt"/>
</dbReference>
<dbReference type="PANTHER" id="PTHR24235">
    <property type="entry name" value="NEUROPEPTIDE Y RECEPTOR"/>
    <property type="match status" value="1"/>
</dbReference>
<dbReference type="PANTHER" id="PTHR24235:SF11">
    <property type="entry name" value="PROLACTIN-RELEASING PEPTIDE RECEPTOR"/>
    <property type="match status" value="1"/>
</dbReference>
<dbReference type="Pfam" id="PF00001">
    <property type="entry name" value="7tm_1"/>
    <property type="match status" value="1"/>
</dbReference>
<dbReference type="PRINTS" id="PR00237">
    <property type="entry name" value="GPCRRHODOPSN"/>
</dbReference>
<dbReference type="PRINTS" id="PR01018">
    <property type="entry name" value="PRPRECEPTOR"/>
</dbReference>
<dbReference type="SMART" id="SM01381">
    <property type="entry name" value="7TM_GPCR_Srsx"/>
    <property type="match status" value="1"/>
</dbReference>
<dbReference type="SUPFAM" id="SSF81321">
    <property type="entry name" value="Family A G protein-coupled receptor-like"/>
    <property type="match status" value="1"/>
</dbReference>
<dbReference type="PROSITE" id="PS00237">
    <property type="entry name" value="G_PROTEIN_RECEP_F1_1"/>
    <property type="match status" value="1"/>
</dbReference>
<dbReference type="PROSITE" id="PS50262">
    <property type="entry name" value="G_PROTEIN_RECEP_F1_2"/>
    <property type="match status" value="1"/>
</dbReference>
<feature type="chain" id="PRO_0000069526" description="Prolactin-releasing peptide receptor">
    <location>
        <begin position="1"/>
        <end position="370"/>
    </location>
</feature>
<feature type="topological domain" description="Extracellular" evidence="2">
    <location>
        <begin position="1"/>
        <end position="62"/>
    </location>
</feature>
<feature type="transmembrane region" description="Helical; Name=1" evidence="2">
    <location>
        <begin position="63"/>
        <end position="83"/>
    </location>
</feature>
<feature type="topological domain" description="Cytoplasmic" evidence="2">
    <location>
        <begin position="84"/>
        <end position="101"/>
    </location>
</feature>
<feature type="transmembrane region" description="Helical; Name=2" evidence="2">
    <location>
        <begin position="102"/>
        <end position="122"/>
    </location>
</feature>
<feature type="topological domain" description="Extracellular" evidence="2">
    <location>
        <begin position="123"/>
        <end position="126"/>
    </location>
</feature>
<feature type="transmembrane region" description="Helical; Name=3" evidence="2">
    <location>
        <begin position="127"/>
        <end position="147"/>
    </location>
</feature>
<feature type="topological domain" description="Cytoplasmic" evidence="2">
    <location>
        <begin position="148"/>
        <end position="175"/>
    </location>
</feature>
<feature type="transmembrane region" description="Helical; Name=4" evidence="2">
    <location>
        <begin position="176"/>
        <end position="196"/>
    </location>
</feature>
<feature type="topological domain" description="Extracellular" evidence="2">
    <location>
        <begin position="197"/>
        <end position="223"/>
    </location>
</feature>
<feature type="transmembrane region" description="Helical; Name=5" evidence="2">
    <location>
        <begin position="224"/>
        <end position="244"/>
    </location>
</feature>
<feature type="topological domain" description="Cytoplasmic" evidence="2">
    <location>
        <begin position="245"/>
        <end position="276"/>
    </location>
</feature>
<feature type="transmembrane region" description="Helical; Name=6" evidence="2">
    <location>
        <begin position="277"/>
        <end position="297"/>
    </location>
</feature>
<feature type="topological domain" description="Extracellular" evidence="2">
    <location>
        <begin position="298"/>
        <end position="317"/>
    </location>
</feature>
<feature type="transmembrane region" description="Helical; Name=7" evidence="2">
    <location>
        <begin position="318"/>
        <end position="338"/>
    </location>
</feature>
<feature type="topological domain" description="Cytoplasmic" evidence="2">
    <location>
        <begin position="339"/>
        <end position="370"/>
    </location>
</feature>
<feature type="region of interest" description="Disordered" evidence="4">
    <location>
        <begin position="1"/>
        <end position="34"/>
    </location>
</feature>
<feature type="region of interest" description="Required for interaction with GRIP1, GRIP2 and PICK1" evidence="1">
    <location>
        <begin position="365"/>
        <end position="370"/>
    </location>
</feature>
<feature type="compositionally biased region" description="Polar residues" evidence="4">
    <location>
        <begin position="21"/>
        <end position="34"/>
    </location>
</feature>
<feature type="glycosylation site" description="N-linked (GlcNAc...) asparagine" evidence="2">
    <location>
        <position position="27"/>
    </location>
</feature>
<feature type="glycosylation site" description="N-linked (GlcNAc...) asparagine" evidence="2">
    <location>
        <position position="36"/>
    </location>
</feature>
<feature type="disulfide bond" evidence="3">
    <location>
        <begin position="134"/>
        <end position="211"/>
    </location>
</feature>
<accession>Q64121</accession>
<reference key="1">
    <citation type="journal article" date="1995" name="Biochem. Biophys. Res. Commun.">
        <title>Sequence and tissue distribution of a candidate G-coupled receptor cloned from rat hypothalamus.</title>
        <authorList>
            <person name="Welch S.K."/>
            <person name="O'Hara B.F."/>
            <person name="Kilduff T.S."/>
            <person name="Heller H.C."/>
        </authorList>
    </citation>
    <scope>NUCLEOTIDE SEQUENCE [MRNA]</scope>
    <source>
        <tissue>Hypothalamus</tissue>
    </source>
</reference>
<reference key="2">
    <citation type="journal article" date="1999" name="Regul. Pept.">
        <title>Tissue distribution of prolactin-releasing peptide (PrRP) and its receptor.</title>
        <authorList>
            <person name="Fujii R."/>
            <person name="Fukusumi S."/>
            <person name="Hosoya M."/>
            <person name="Kawamata Y."/>
            <person name="Habata Y."/>
            <person name="Hinuma S."/>
            <person name="Sekiguchi M."/>
            <person name="Kitada C."/>
            <person name="Kurokawa T."/>
            <person name="Nishimura O."/>
            <person name="Onda H."/>
            <person name="Sumino Y."/>
            <person name="Fujino M."/>
        </authorList>
    </citation>
    <scope>TISSUE SPECIFICITY</scope>
</reference>
<gene>
    <name type="primary">Prlhr</name>
    <name type="synonym">Gpr10</name>
</gene>
<name>PRLHR_RAT</name>
<sequence length="370" mass="41161">MTSLPPGTTGDPDLFSGPSPAGSTPANQSAEASESNVSATVPRAAAVTPFQSLQLVHQLKGLIVMLYSIVVVVGLVGNCLLVLVIARVRRLHNVTNFLIGNLALSDVLMCAACVPLTLAYAFEPRGWVFGGGLCHLVFFLQPVTVYVSVFTLTTIAVDRYVVLVHPLRRRISLKLSAYAVLGIWALSAVLALPAAVHTYHVELKPHDVRLCEEFWGSQERQRQIYAWGLLLGTYLLPLLAILLSYVRVSVKLRNRVVPGSVTQSQADWDRARRRRTFCLLVVVVVVFALCWLPLHIFNLLRDLDPRAIDPYAFGLVQLLCHWLAMSSACYNPFIYAWLHDSFREELRKMLLSWPRKIVPHGQNMTVSVVI</sequence>
<proteinExistence type="evidence at transcript level"/>
<protein>
    <recommendedName>
        <fullName>Prolactin-releasing peptide receptor</fullName>
        <shortName>PrRP receptor</shortName>
        <shortName>PrRPR</shortName>
    </recommendedName>
    <alternativeName>
        <fullName>G-protein coupled receptor 10</fullName>
    </alternativeName>
    <alternativeName>
        <fullName>UHR-1</fullName>
    </alternativeName>
</protein>
<organism>
    <name type="scientific">Rattus norvegicus</name>
    <name type="common">Rat</name>
    <dbReference type="NCBI Taxonomy" id="10116"/>
    <lineage>
        <taxon>Eukaryota</taxon>
        <taxon>Metazoa</taxon>
        <taxon>Chordata</taxon>
        <taxon>Craniata</taxon>
        <taxon>Vertebrata</taxon>
        <taxon>Euteleostomi</taxon>
        <taxon>Mammalia</taxon>
        <taxon>Eutheria</taxon>
        <taxon>Euarchontoglires</taxon>
        <taxon>Glires</taxon>
        <taxon>Rodentia</taxon>
        <taxon>Myomorpha</taxon>
        <taxon>Muroidea</taxon>
        <taxon>Muridae</taxon>
        <taxon>Murinae</taxon>
        <taxon>Rattus</taxon>
    </lineage>
</organism>
<evidence type="ECO:0000250" key="1"/>
<evidence type="ECO:0000255" key="2"/>
<evidence type="ECO:0000255" key="3">
    <source>
        <dbReference type="PROSITE-ProRule" id="PRU00521"/>
    </source>
</evidence>
<evidence type="ECO:0000256" key="4">
    <source>
        <dbReference type="SAM" id="MobiDB-lite"/>
    </source>
</evidence>
<evidence type="ECO:0000269" key="5">
    <source>
    </source>
</evidence>